<dbReference type="EMBL" id="AL009126">
    <property type="protein sequence ID" value="CAB14525.1"/>
    <property type="molecule type" value="Genomic_DNA"/>
</dbReference>
<dbReference type="PIR" id="B69677">
    <property type="entry name" value="B69677"/>
</dbReference>
<dbReference type="RefSeq" id="NP_390461.1">
    <property type="nucleotide sequence ID" value="NC_000964.3"/>
</dbReference>
<dbReference type="RefSeq" id="WP_004398770.1">
    <property type="nucleotide sequence ID" value="NZ_OZ025638.1"/>
</dbReference>
<dbReference type="PDB" id="8ARE">
    <property type="method" value="X-ray"/>
    <property type="resolution" value="1.90 A"/>
    <property type="chains" value="B=31-35"/>
</dbReference>
<dbReference type="PDBsum" id="8ARE"/>
<dbReference type="SMR" id="O32025"/>
<dbReference type="FunCoup" id="O32025">
    <property type="interactions" value="336"/>
</dbReference>
<dbReference type="STRING" id="224308.BSU25840"/>
<dbReference type="PaxDb" id="224308-BSU25840"/>
<dbReference type="EnsemblBacteria" id="CAB14525">
    <property type="protein sequence ID" value="CAB14525"/>
    <property type="gene ID" value="BSU_25840"/>
</dbReference>
<dbReference type="GeneID" id="937784"/>
<dbReference type="KEGG" id="bsu:BSU25840"/>
<dbReference type="PATRIC" id="fig|224308.179.peg.2808"/>
<dbReference type="InParanoid" id="O32025"/>
<dbReference type="OrthoDB" id="2905397at2"/>
<dbReference type="BioCyc" id="BSUB:BSU25840-MONOMER"/>
<dbReference type="Proteomes" id="UP000001570">
    <property type="component" value="Chromosome"/>
</dbReference>
<dbReference type="GO" id="GO:0005737">
    <property type="term" value="C:cytoplasm"/>
    <property type="evidence" value="ECO:0007669"/>
    <property type="project" value="UniProtKB-SubCell"/>
</dbReference>
<dbReference type="GO" id="GO:0005576">
    <property type="term" value="C:extracellular region"/>
    <property type="evidence" value="ECO:0007669"/>
    <property type="project" value="UniProtKB-SubCell"/>
</dbReference>
<dbReference type="GO" id="GO:0030435">
    <property type="term" value="P:sporulation resulting in formation of a cellular spore"/>
    <property type="evidence" value="ECO:0007669"/>
    <property type="project" value="UniProtKB-KW"/>
</dbReference>
<sequence length="44" mass="4850">MKSKLFISLSAVLIGLAFFGSMYNGEMKEASRNVTLAPTHEFLV</sequence>
<proteinExistence type="evidence at protein level"/>
<keyword id="KW-0002">3D-structure</keyword>
<keyword id="KW-0963">Cytoplasm</keyword>
<keyword id="KW-1185">Reference proteome</keyword>
<keyword id="KW-0964">Secreted</keyword>
<keyword id="KW-0749">Sporulation</keyword>
<protein>
    <recommendedName>
        <fullName evidence="4">Phosphatase RapE inhibitor</fullName>
    </recommendedName>
    <alternativeName>
        <fullName>Phosphatase regulator E</fullName>
    </alternativeName>
</protein>
<name>PHRE_BACSU</name>
<reference key="1">
    <citation type="journal article" date="1997" name="Nature">
        <title>The complete genome sequence of the Gram-positive bacterium Bacillus subtilis.</title>
        <authorList>
            <person name="Kunst F."/>
            <person name="Ogasawara N."/>
            <person name="Moszer I."/>
            <person name="Albertini A.M."/>
            <person name="Alloni G."/>
            <person name="Azevedo V."/>
            <person name="Bertero M.G."/>
            <person name="Bessieres P."/>
            <person name="Bolotin A."/>
            <person name="Borchert S."/>
            <person name="Borriss R."/>
            <person name="Boursier L."/>
            <person name="Brans A."/>
            <person name="Braun M."/>
            <person name="Brignell S.C."/>
            <person name="Bron S."/>
            <person name="Brouillet S."/>
            <person name="Bruschi C.V."/>
            <person name="Caldwell B."/>
            <person name="Capuano V."/>
            <person name="Carter N.M."/>
            <person name="Choi S.-K."/>
            <person name="Codani J.-J."/>
            <person name="Connerton I.F."/>
            <person name="Cummings N.J."/>
            <person name="Daniel R.A."/>
            <person name="Denizot F."/>
            <person name="Devine K.M."/>
            <person name="Duesterhoeft A."/>
            <person name="Ehrlich S.D."/>
            <person name="Emmerson P.T."/>
            <person name="Entian K.-D."/>
            <person name="Errington J."/>
            <person name="Fabret C."/>
            <person name="Ferrari E."/>
            <person name="Foulger D."/>
            <person name="Fritz C."/>
            <person name="Fujita M."/>
            <person name="Fujita Y."/>
            <person name="Fuma S."/>
            <person name="Galizzi A."/>
            <person name="Galleron N."/>
            <person name="Ghim S.-Y."/>
            <person name="Glaser P."/>
            <person name="Goffeau A."/>
            <person name="Golightly E.J."/>
            <person name="Grandi G."/>
            <person name="Guiseppi G."/>
            <person name="Guy B.J."/>
            <person name="Haga K."/>
            <person name="Haiech J."/>
            <person name="Harwood C.R."/>
            <person name="Henaut A."/>
            <person name="Hilbert H."/>
            <person name="Holsappel S."/>
            <person name="Hosono S."/>
            <person name="Hullo M.-F."/>
            <person name="Itaya M."/>
            <person name="Jones L.-M."/>
            <person name="Joris B."/>
            <person name="Karamata D."/>
            <person name="Kasahara Y."/>
            <person name="Klaerr-Blanchard M."/>
            <person name="Klein C."/>
            <person name="Kobayashi Y."/>
            <person name="Koetter P."/>
            <person name="Koningstein G."/>
            <person name="Krogh S."/>
            <person name="Kumano M."/>
            <person name="Kurita K."/>
            <person name="Lapidus A."/>
            <person name="Lardinois S."/>
            <person name="Lauber J."/>
            <person name="Lazarevic V."/>
            <person name="Lee S.-M."/>
            <person name="Levine A."/>
            <person name="Liu H."/>
            <person name="Masuda S."/>
            <person name="Mauel C."/>
            <person name="Medigue C."/>
            <person name="Medina N."/>
            <person name="Mellado R.P."/>
            <person name="Mizuno M."/>
            <person name="Moestl D."/>
            <person name="Nakai S."/>
            <person name="Noback M."/>
            <person name="Noone D."/>
            <person name="O'Reilly M."/>
            <person name="Ogawa K."/>
            <person name="Ogiwara A."/>
            <person name="Oudega B."/>
            <person name="Park S.-H."/>
            <person name="Parro V."/>
            <person name="Pohl T.M."/>
            <person name="Portetelle D."/>
            <person name="Porwollik S."/>
            <person name="Prescott A.M."/>
            <person name="Presecan E."/>
            <person name="Pujic P."/>
            <person name="Purnelle B."/>
            <person name="Rapoport G."/>
            <person name="Rey M."/>
            <person name="Reynolds S."/>
            <person name="Rieger M."/>
            <person name="Rivolta C."/>
            <person name="Rocha E."/>
            <person name="Roche B."/>
            <person name="Rose M."/>
            <person name="Sadaie Y."/>
            <person name="Sato T."/>
            <person name="Scanlan E."/>
            <person name="Schleich S."/>
            <person name="Schroeter R."/>
            <person name="Scoffone F."/>
            <person name="Sekiguchi J."/>
            <person name="Sekowska A."/>
            <person name="Seror S.J."/>
            <person name="Serror P."/>
            <person name="Shin B.-S."/>
            <person name="Soldo B."/>
            <person name="Sorokin A."/>
            <person name="Tacconi E."/>
            <person name="Takagi T."/>
            <person name="Takahashi H."/>
            <person name="Takemaru K."/>
            <person name="Takeuchi M."/>
            <person name="Tamakoshi A."/>
            <person name="Tanaka T."/>
            <person name="Terpstra P."/>
            <person name="Tognoni A."/>
            <person name="Tosato V."/>
            <person name="Uchiyama S."/>
            <person name="Vandenbol M."/>
            <person name="Vannier F."/>
            <person name="Vassarotti A."/>
            <person name="Viari A."/>
            <person name="Wambutt R."/>
            <person name="Wedler E."/>
            <person name="Wedler H."/>
            <person name="Weitzenegger T."/>
            <person name="Winters P."/>
            <person name="Wipat A."/>
            <person name="Yamamoto H."/>
            <person name="Yamane K."/>
            <person name="Yasumoto K."/>
            <person name="Yata K."/>
            <person name="Yoshida K."/>
            <person name="Yoshikawa H.-F."/>
            <person name="Zumstein E."/>
            <person name="Yoshikawa H."/>
            <person name="Danchin A."/>
        </authorList>
    </citation>
    <scope>NUCLEOTIDE SEQUENCE [LARGE SCALE GENOMIC DNA]</scope>
    <source>
        <strain>168</strain>
    </source>
</reference>
<reference key="2">
    <citation type="journal article" date="2000" name="J. Bacteriol.">
        <title>Differential processing of propeptide inhibitors of Rap phosphatases in Bacillus subtilis.</title>
        <authorList>
            <person name="Jiang M."/>
            <person name="Grau R."/>
            <person name="Perego M."/>
        </authorList>
    </citation>
    <scope>FUNCTION</scope>
    <scope>INDUCTION</scope>
    <scope>DISRUPTION PHENOTYPE</scope>
    <source>
        <strain>168 / JH642</strain>
    </source>
</reference>
<reference key="3">
    <citation type="journal article" date="2003" name="J. Bacteriol.">
        <title>Molecular analysis of Phr peptide processing in Bacillus subtilis.</title>
        <authorList>
            <person name="Stephenson S."/>
            <person name="Mueller C."/>
            <person name="Jiang M."/>
            <person name="Perego M."/>
        </authorList>
    </citation>
    <scope>MUTAGENESIS OF ASN-24 AND ALA-30</scope>
    <source>
        <strain>168 / JH642</strain>
    </source>
</reference>
<comment type="function">
    <text evidence="2 5">Signaling molecule involved in the regulation of sporulation (PubMed:10629174). Secreted during production, but the mature peptide acts intracellularly, indicating that it needs to be imported into the cell to function (Probable). Inhibitor of the RapE phosphatase activity (PubMed:10629174). Does not inhibit the phosphatase activity of RapA and RapB (PubMed:10629174). Probably plays a dispensable role in the overall context of sporulation initiation (PubMed:10629174).</text>
</comment>
<comment type="subcellular location">
    <subcellularLocation>
        <location evidence="1">Secreted</location>
    </subcellularLocation>
    <subcellularLocation>
        <location evidence="1">Cytoplasm</location>
    </subcellularLocation>
    <text evidence="1">Produced through an export-import maturation process.</text>
</comment>
<comment type="induction">
    <text evidence="2">Transcription occurs independently of the rapE promoter and is controlled by the Spo0A-AbrB pair of transcriptional regulators.</text>
</comment>
<comment type="PTM">
    <text evidence="6">Contains a predicted signal peptide cleavage site in the N-terminal region, however the propeptide is probably only subject to processing events at the ends of the mature peptide.</text>
</comment>
<comment type="disruption phenotype">
    <text evidence="2">Inactivation of the gene leads to a reduction in sporulation efficiency.</text>
</comment>
<comment type="similarity">
    <text evidence="4">Belongs to the Phr family.</text>
</comment>
<organism>
    <name type="scientific">Bacillus subtilis (strain 168)</name>
    <dbReference type="NCBI Taxonomy" id="224308"/>
    <lineage>
        <taxon>Bacteria</taxon>
        <taxon>Bacillati</taxon>
        <taxon>Bacillota</taxon>
        <taxon>Bacilli</taxon>
        <taxon>Bacillales</taxon>
        <taxon>Bacillaceae</taxon>
        <taxon>Bacillus</taxon>
    </lineage>
</organism>
<gene>
    <name type="primary">phrE</name>
    <name type="ordered locus">BSU25840</name>
</gene>
<accession>O32025</accession>
<evidence type="ECO:0000250" key="1">
    <source>
        <dbReference type="UniProtKB" id="P94416"/>
    </source>
</evidence>
<evidence type="ECO:0000269" key="2">
    <source>
    </source>
</evidence>
<evidence type="ECO:0000269" key="3">
    <source>
    </source>
</evidence>
<evidence type="ECO:0000305" key="4"/>
<evidence type="ECO:0000305" key="5">
    <source>
    </source>
</evidence>
<evidence type="ECO:0000305" key="6">
    <source>
    </source>
</evidence>
<feature type="propeptide" id="PRO_0000456998" evidence="5">
    <location>
        <begin position="1"/>
        <end position="30"/>
    </location>
</feature>
<feature type="peptide" id="PRO_0000456999" description="Phosphatase RapE inhibitor" evidence="2">
    <location>
        <begin position="31"/>
        <end position="35"/>
    </location>
</feature>
<feature type="propeptide" id="PRO_0000457000" evidence="5">
    <location>
        <begin position="36"/>
        <end position="44"/>
    </location>
</feature>
<feature type="mutagenesis site" description="Restores a sporulation-proficient phenotype in a phrA deletion mutant." evidence="3">
    <original>N</original>
    <variation>P</variation>
    <location>
        <position position="24"/>
    </location>
</feature>
<feature type="mutagenesis site" description="Cannot restore a sporulation-proficient phenotype in a phrA deletion mutant." evidence="3">
    <original>A</original>
    <variation>P</variation>
    <location>
        <position position="30"/>
    </location>
</feature>